<name>PRMA_PHOV8</name>
<organism>
    <name type="scientific">Phocaeicola vulgatus (strain ATCC 8482 / DSM 1447 / JCM 5826 / CCUG 4940 / NBRC 14291 / NCTC 11154)</name>
    <name type="common">Bacteroides vulgatus</name>
    <dbReference type="NCBI Taxonomy" id="435590"/>
    <lineage>
        <taxon>Bacteria</taxon>
        <taxon>Pseudomonadati</taxon>
        <taxon>Bacteroidota</taxon>
        <taxon>Bacteroidia</taxon>
        <taxon>Bacteroidales</taxon>
        <taxon>Bacteroidaceae</taxon>
        <taxon>Phocaeicola</taxon>
    </lineage>
</organism>
<gene>
    <name evidence="1" type="primary">prmA</name>
    <name type="ordered locus">BVU_2289</name>
</gene>
<sequence>MKYLEVTFTTHPCNETVNDVVSALAGEIGFESFVECEGGIQAYIQQTLFDEEALKEMVANFPLPDTRIEYTIKEAEDKNWNEEWEKNFFQPIVIGDRCCIHSTFHKDTPKTEYEILINPQMAFGTGHHETTSSIISELLEADLKGKSVLDMGCGTSILAILASMRGANPVTAIDIDDWCVNNSKDNIALNHIHNITVELGDANLLKGRKAFDVIIANINRNILLADLPHYAACMHPGSEIFMSGFYIQDIPFIREKAESLGMEFVHHREKNNWAAVKFIMK</sequence>
<protein>
    <recommendedName>
        <fullName evidence="1">Ribosomal protein L11 methyltransferase</fullName>
        <shortName evidence="1">L11 Mtase</shortName>
        <ecNumber evidence="1">2.1.1.-</ecNumber>
    </recommendedName>
</protein>
<accession>A6L2N4</accession>
<comment type="function">
    <text evidence="1">Methylates ribosomal protein L11.</text>
</comment>
<comment type="catalytic activity">
    <reaction evidence="1">
        <text>L-lysyl-[protein] + 3 S-adenosyl-L-methionine = N(6),N(6),N(6)-trimethyl-L-lysyl-[protein] + 3 S-adenosyl-L-homocysteine + 3 H(+)</text>
        <dbReference type="Rhea" id="RHEA:54192"/>
        <dbReference type="Rhea" id="RHEA-COMP:9752"/>
        <dbReference type="Rhea" id="RHEA-COMP:13826"/>
        <dbReference type="ChEBI" id="CHEBI:15378"/>
        <dbReference type="ChEBI" id="CHEBI:29969"/>
        <dbReference type="ChEBI" id="CHEBI:57856"/>
        <dbReference type="ChEBI" id="CHEBI:59789"/>
        <dbReference type="ChEBI" id="CHEBI:61961"/>
    </reaction>
</comment>
<comment type="subcellular location">
    <subcellularLocation>
        <location evidence="1">Cytoplasm</location>
    </subcellularLocation>
</comment>
<comment type="similarity">
    <text evidence="1">Belongs to the methyltransferase superfamily. PrmA family.</text>
</comment>
<feature type="chain" id="PRO_1000045987" description="Ribosomal protein L11 methyltransferase">
    <location>
        <begin position="1"/>
        <end position="281"/>
    </location>
</feature>
<feature type="binding site" evidence="1">
    <location>
        <position position="131"/>
    </location>
    <ligand>
        <name>S-adenosyl-L-methionine</name>
        <dbReference type="ChEBI" id="CHEBI:59789"/>
    </ligand>
</feature>
<feature type="binding site" evidence="1">
    <location>
        <position position="152"/>
    </location>
    <ligand>
        <name>S-adenosyl-L-methionine</name>
        <dbReference type="ChEBI" id="CHEBI:59789"/>
    </ligand>
</feature>
<feature type="binding site" evidence="1">
    <location>
        <position position="174"/>
    </location>
    <ligand>
        <name>S-adenosyl-L-methionine</name>
        <dbReference type="ChEBI" id="CHEBI:59789"/>
    </ligand>
</feature>
<feature type="binding site" evidence="1">
    <location>
        <position position="217"/>
    </location>
    <ligand>
        <name>S-adenosyl-L-methionine</name>
        <dbReference type="ChEBI" id="CHEBI:59789"/>
    </ligand>
</feature>
<evidence type="ECO:0000255" key="1">
    <source>
        <dbReference type="HAMAP-Rule" id="MF_00735"/>
    </source>
</evidence>
<dbReference type="EC" id="2.1.1.-" evidence="1"/>
<dbReference type="EMBL" id="CP000139">
    <property type="protein sequence ID" value="ABR39948.1"/>
    <property type="molecule type" value="Genomic_DNA"/>
</dbReference>
<dbReference type="RefSeq" id="WP_005846146.1">
    <property type="nucleotide sequence ID" value="NZ_CAXVNH010000025.1"/>
</dbReference>
<dbReference type="SMR" id="A6L2N4"/>
<dbReference type="STRING" id="435590.BVU_2289"/>
<dbReference type="PaxDb" id="435590-BVU_2289"/>
<dbReference type="GeneID" id="5303253"/>
<dbReference type="KEGG" id="bvu:BVU_2289"/>
<dbReference type="eggNOG" id="COG2264">
    <property type="taxonomic scope" value="Bacteria"/>
</dbReference>
<dbReference type="HOGENOM" id="CLU_049382_0_0_10"/>
<dbReference type="BioCyc" id="BVUL435590:G1G59-2380-MONOMER"/>
<dbReference type="Proteomes" id="UP000002861">
    <property type="component" value="Chromosome"/>
</dbReference>
<dbReference type="GO" id="GO:0005737">
    <property type="term" value="C:cytoplasm"/>
    <property type="evidence" value="ECO:0007669"/>
    <property type="project" value="UniProtKB-SubCell"/>
</dbReference>
<dbReference type="GO" id="GO:0016279">
    <property type="term" value="F:protein-lysine N-methyltransferase activity"/>
    <property type="evidence" value="ECO:0007669"/>
    <property type="project" value="RHEA"/>
</dbReference>
<dbReference type="GO" id="GO:0032259">
    <property type="term" value="P:methylation"/>
    <property type="evidence" value="ECO:0007669"/>
    <property type="project" value="UniProtKB-KW"/>
</dbReference>
<dbReference type="CDD" id="cd02440">
    <property type="entry name" value="AdoMet_MTases"/>
    <property type="match status" value="1"/>
</dbReference>
<dbReference type="Gene3D" id="3.40.50.150">
    <property type="entry name" value="Vaccinia Virus protein VP39"/>
    <property type="match status" value="1"/>
</dbReference>
<dbReference type="HAMAP" id="MF_00735">
    <property type="entry name" value="Methyltr_PrmA"/>
    <property type="match status" value="1"/>
</dbReference>
<dbReference type="InterPro" id="IPR050078">
    <property type="entry name" value="Ribosomal_L11_MeTrfase_PrmA"/>
</dbReference>
<dbReference type="InterPro" id="IPR004498">
    <property type="entry name" value="Ribosomal_PrmA_MeTrfase"/>
</dbReference>
<dbReference type="InterPro" id="IPR029063">
    <property type="entry name" value="SAM-dependent_MTases_sf"/>
</dbReference>
<dbReference type="NCBIfam" id="NF001785">
    <property type="entry name" value="PRK00517.2-2"/>
    <property type="match status" value="1"/>
</dbReference>
<dbReference type="PANTHER" id="PTHR43648">
    <property type="entry name" value="ELECTRON TRANSFER FLAVOPROTEIN BETA SUBUNIT LYSINE METHYLTRANSFERASE"/>
    <property type="match status" value="1"/>
</dbReference>
<dbReference type="PANTHER" id="PTHR43648:SF1">
    <property type="entry name" value="ELECTRON TRANSFER FLAVOPROTEIN BETA SUBUNIT LYSINE METHYLTRANSFERASE"/>
    <property type="match status" value="1"/>
</dbReference>
<dbReference type="Pfam" id="PF06325">
    <property type="entry name" value="PrmA"/>
    <property type="match status" value="1"/>
</dbReference>
<dbReference type="PIRSF" id="PIRSF000401">
    <property type="entry name" value="RPL11_MTase"/>
    <property type="match status" value="1"/>
</dbReference>
<dbReference type="SUPFAM" id="SSF53335">
    <property type="entry name" value="S-adenosyl-L-methionine-dependent methyltransferases"/>
    <property type="match status" value="1"/>
</dbReference>
<reference key="1">
    <citation type="journal article" date="2007" name="PLoS Biol.">
        <title>Evolution of symbiotic bacteria in the distal human intestine.</title>
        <authorList>
            <person name="Xu J."/>
            <person name="Mahowald M.A."/>
            <person name="Ley R.E."/>
            <person name="Lozupone C.A."/>
            <person name="Hamady M."/>
            <person name="Martens E.C."/>
            <person name="Henrissat B."/>
            <person name="Coutinho P.M."/>
            <person name="Minx P."/>
            <person name="Latreille P."/>
            <person name="Cordum H."/>
            <person name="Van Brunt A."/>
            <person name="Kim K."/>
            <person name="Fulton R.S."/>
            <person name="Fulton L.A."/>
            <person name="Clifton S.W."/>
            <person name="Wilson R.K."/>
            <person name="Knight R.D."/>
            <person name="Gordon J.I."/>
        </authorList>
    </citation>
    <scope>NUCLEOTIDE SEQUENCE [LARGE SCALE GENOMIC DNA]</scope>
    <source>
        <strain>ATCC 8482 / DSM 1447 / JCM 5826 / CCUG 4940 / NBRC 14291 / NCTC 11154</strain>
    </source>
</reference>
<keyword id="KW-0963">Cytoplasm</keyword>
<keyword id="KW-0489">Methyltransferase</keyword>
<keyword id="KW-0949">S-adenosyl-L-methionine</keyword>
<keyword id="KW-0808">Transferase</keyword>
<proteinExistence type="inferred from homology"/>